<dbReference type="EC" id="5.3.1.16" evidence="1"/>
<dbReference type="EMBL" id="CP000860">
    <property type="protein sequence ID" value="ACA60125.1"/>
    <property type="molecule type" value="Genomic_DNA"/>
</dbReference>
<dbReference type="RefSeq" id="WP_012302706.1">
    <property type="nucleotide sequence ID" value="NC_010424.1"/>
</dbReference>
<dbReference type="SMR" id="B1I557"/>
<dbReference type="STRING" id="477974.Daud_1623"/>
<dbReference type="KEGG" id="dau:Daud_1623"/>
<dbReference type="eggNOG" id="COG0106">
    <property type="taxonomic scope" value="Bacteria"/>
</dbReference>
<dbReference type="HOGENOM" id="CLU_048577_1_1_9"/>
<dbReference type="OrthoDB" id="9807749at2"/>
<dbReference type="UniPathway" id="UPA00031">
    <property type="reaction ID" value="UER00009"/>
</dbReference>
<dbReference type="Proteomes" id="UP000008544">
    <property type="component" value="Chromosome"/>
</dbReference>
<dbReference type="GO" id="GO:0005737">
    <property type="term" value="C:cytoplasm"/>
    <property type="evidence" value="ECO:0007669"/>
    <property type="project" value="UniProtKB-SubCell"/>
</dbReference>
<dbReference type="GO" id="GO:0003949">
    <property type="term" value="F:1-(5-phosphoribosyl)-5-[(5-phosphoribosylamino)methylideneamino]imidazole-4-carboxamide isomerase activity"/>
    <property type="evidence" value="ECO:0007669"/>
    <property type="project" value="UniProtKB-UniRule"/>
</dbReference>
<dbReference type="GO" id="GO:0000105">
    <property type="term" value="P:L-histidine biosynthetic process"/>
    <property type="evidence" value="ECO:0007669"/>
    <property type="project" value="UniProtKB-UniRule"/>
</dbReference>
<dbReference type="GO" id="GO:0000162">
    <property type="term" value="P:L-tryptophan biosynthetic process"/>
    <property type="evidence" value="ECO:0007669"/>
    <property type="project" value="TreeGrafter"/>
</dbReference>
<dbReference type="CDD" id="cd04732">
    <property type="entry name" value="HisA"/>
    <property type="match status" value="1"/>
</dbReference>
<dbReference type="FunFam" id="3.20.20.70:FF:000009">
    <property type="entry name" value="1-(5-phosphoribosyl)-5-[(5-phosphoribosylamino)methylideneamino] imidazole-4-carboxamide isomerase"/>
    <property type="match status" value="1"/>
</dbReference>
<dbReference type="Gene3D" id="3.20.20.70">
    <property type="entry name" value="Aldolase class I"/>
    <property type="match status" value="1"/>
</dbReference>
<dbReference type="HAMAP" id="MF_01014">
    <property type="entry name" value="HisA"/>
    <property type="match status" value="1"/>
</dbReference>
<dbReference type="InterPro" id="IPR013785">
    <property type="entry name" value="Aldolase_TIM"/>
</dbReference>
<dbReference type="InterPro" id="IPR006062">
    <property type="entry name" value="His_biosynth"/>
</dbReference>
<dbReference type="InterPro" id="IPR006063">
    <property type="entry name" value="HisA_bact_arch"/>
</dbReference>
<dbReference type="InterPro" id="IPR044524">
    <property type="entry name" value="Isoase_HisA-like"/>
</dbReference>
<dbReference type="InterPro" id="IPR023016">
    <property type="entry name" value="Isoase_HisA-like_bact"/>
</dbReference>
<dbReference type="InterPro" id="IPR011060">
    <property type="entry name" value="RibuloseP-bd_barrel"/>
</dbReference>
<dbReference type="NCBIfam" id="TIGR00007">
    <property type="entry name" value="1-(5-phosphoribosyl)-5-[(5-phosphoribosylamino)methylideneamino]imidazole-4-carboxamide isomerase"/>
    <property type="match status" value="1"/>
</dbReference>
<dbReference type="NCBIfam" id="NF010112">
    <property type="entry name" value="PRK13585.1"/>
    <property type="match status" value="1"/>
</dbReference>
<dbReference type="PANTHER" id="PTHR43090">
    <property type="entry name" value="1-(5-PHOSPHORIBOSYL)-5-[(5-PHOSPHORIBOSYLAMINO)METHYLIDENEAMINO] IMIDAZOLE-4-CARBOXAMIDE ISOMERASE"/>
    <property type="match status" value="1"/>
</dbReference>
<dbReference type="PANTHER" id="PTHR43090:SF2">
    <property type="entry name" value="1-(5-PHOSPHORIBOSYL)-5-[(5-PHOSPHORIBOSYLAMINO)METHYLIDENEAMINO] IMIDAZOLE-4-CARBOXAMIDE ISOMERASE"/>
    <property type="match status" value="1"/>
</dbReference>
<dbReference type="Pfam" id="PF00977">
    <property type="entry name" value="His_biosynth"/>
    <property type="match status" value="1"/>
</dbReference>
<dbReference type="SUPFAM" id="SSF51366">
    <property type="entry name" value="Ribulose-phoshate binding barrel"/>
    <property type="match status" value="1"/>
</dbReference>
<protein>
    <recommendedName>
        <fullName evidence="1">1-(5-phosphoribosyl)-5-[(5-phosphoribosylamino)methylideneamino] imidazole-4-carboxamide isomerase</fullName>
        <ecNumber evidence="1">5.3.1.16</ecNumber>
    </recommendedName>
    <alternativeName>
        <fullName evidence="1">Phosphoribosylformimino-5-aminoimidazole carboxamide ribotide isomerase</fullName>
    </alternativeName>
</protein>
<name>HIS4_DESAP</name>
<organism>
    <name type="scientific">Desulforudis audaxviator (strain MP104C)</name>
    <dbReference type="NCBI Taxonomy" id="477974"/>
    <lineage>
        <taxon>Bacteria</taxon>
        <taxon>Bacillati</taxon>
        <taxon>Bacillota</taxon>
        <taxon>Clostridia</taxon>
        <taxon>Thermoanaerobacterales</taxon>
        <taxon>Candidatus Desulforudaceae</taxon>
        <taxon>Candidatus Desulforudis</taxon>
    </lineage>
</organism>
<accession>B1I557</accession>
<comment type="catalytic activity">
    <reaction evidence="1">
        <text>1-(5-phospho-beta-D-ribosyl)-5-[(5-phospho-beta-D-ribosylamino)methylideneamino]imidazole-4-carboxamide = 5-[(5-phospho-1-deoxy-D-ribulos-1-ylimino)methylamino]-1-(5-phospho-beta-D-ribosyl)imidazole-4-carboxamide</text>
        <dbReference type="Rhea" id="RHEA:15469"/>
        <dbReference type="ChEBI" id="CHEBI:58435"/>
        <dbReference type="ChEBI" id="CHEBI:58525"/>
        <dbReference type="EC" id="5.3.1.16"/>
    </reaction>
</comment>
<comment type="pathway">
    <text evidence="1">Amino-acid biosynthesis; L-histidine biosynthesis; L-histidine from 5-phospho-alpha-D-ribose 1-diphosphate: step 4/9.</text>
</comment>
<comment type="subcellular location">
    <subcellularLocation>
        <location evidence="1">Cytoplasm</location>
    </subcellularLocation>
</comment>
<comment type="similarity">
    <text evidence="1">Belongs to the HisA/HisF family.</text>
</comment>
<sequence length="262" mass="28414">MLIIPAVDLRGGRCVRLFQGRADQETVYSTDPVAVARTWEEQGARRLHVVDLDGAFTGKPQNSGVVLDIVKSVNIPVQVGGGIRNPENVKCYLEHGVDRVILGTAALTNPEFLDAVVAAYGERIVVGVDCRDGRVCVQGWEQTAATDVLPFLEELVRRGVRRVVFTDVKRDGTLEGPNLEEIARVAAHTELKVIASGGVSRLEDLRALKKLEHLGVDSVIIGKALYAGTITLAEALALERKEKDNVGQEDHSLPRCEPGPRG</sequence>
<gene>
    <name evidence="1" type="primary">hisA</name>
    <name type="ordered locus">Daud_1623</name>
</gene>
<proteinExistence type="inferred from homology"/>
<feature type="chain" id="PRO_1000135103" description="1-(5-phosphoribosyl)-5-[(5-phosphoribosylamino)methylideneamino] imidazole-4-carboxamide isomerase">
    <location>
        <begin position="1"/>
        <end position="262"/>
    </location>
</feature>
<feature type="region of interest" description="Disordered" evidence="2">
    <location>
        <begin position="243"/>
        <end position="262"/>
    </location>
</feature>
<feature type="active site" description="Proton acceptor" evidence="1">
    <location>
        <position position="8"/>
    </location>
</feature>
<feature type="active site" description="Proton donor" evidence="1">
    <location>
        <position position="129"/>
    </location>
</feature>
<reference key="1">
    <citation type="submission" date="2007-10" db="EMBL/GenBank/DDBJ databases">
        <title>Complete sequence of chromosome of Desulforudis audaxviator MP104C.</title>
        <authorList>
            <person name="Copeland A."/>
            <person name="Lucas S."/>
            <person name="Lapidus A."/>
            <person name="Barry K."/>
            <person name="Glavina del Rio T."/>
            <person name="Dalin E."/>
            <person name="Tice H."/>
            <person name="Bruce D."/>
            <person name="Pitluck S."/>
            <person name="Lowry S.R."/>
            <person name="Larimer F."/>
            <person name="Land M.L."/>
            <person name="Hauser L."/>
            <person name="Kyrpides N."/>
            <person name="Ivanova N.N."/>
            <person name="Richardson P."/>
        </authorList>
    </citation>
    <scope>NUCLEOTIDE SEQUENCE [LARGE SCALE GENOMIC DNA]</scope>
    <source>
        <strain>MP104C</strain>
    </source>
</reference>
<evidence type="ECO:0000255" key="1">
    <source>
        <dbReference type="HAMAP-Rule" id="MF_01014"/>
    </source>
</evidence>
<evidence type="ECO:0000256" key="2">
    <source>
        <dbReference type="SAM" id="MobiDB-lite"/>
    </source>
</evidence>
<keyword id="KW-0028">Amino-acid biosynthesis</keyword>
<keyword id="KW-0963">Cytoplasm</keyword>
<keyword id="KW-0368">Histidine biosynthesis</keyword>
<keyword id="KW-0413">Isomerase</keyword>
<keyword id="KW-1185">Reference proteome</keyword>